<protein>
    <recommendedName>
        <fullName>Eukaryotic translation initiation factor 5B</fullName>
        <shortName>eIF-5B</shortName>
        <ecNumber>3.6.5.3</ecNumber>
    </recommendedName>
    <alternativeName>
        <fullName>Translation initiation factor IF-2</fullName>
    </alternativeName>
</protein>
<keyword id="KW-0963">Cytoplasm</keyword>
<keyword id="KW-0342">GTP-binding</keyword>
<keyword id="KW-0378">Hydrolase</keyword>
<keyword id="KW-0396">Initiation factor</keyword>
<keyword id="KW-0479">Metal-binding</keyword>
<keyword id="KW-0547">Nucleotide-binding</keyword>
<keyword id="KW-0597">Phosphoprotein</keyword>
<keyword id="KW-0648">Protein biosynthesis</keyword>
<keyword id="KW-1185">Reference proteome</keyword>
<evidence type="ECO:0000250" key="1"/>
<evidence type="ECO:0000250" key="2">
    <source>
        <dbReference type="UniProtKB" id="G0S8G9"/>
    </source>
</evidence>
<evidence type="ECO:0000250" key="3">
    <source>
        <dbReference type="UniProtKB" id="P39730"/>
    </source>
</evidence>
<evidence type="ECO:0000255" key="4">
    <source>
        <dbReference type="PROSITE-ProRule" id="PRU01059"/>
    </source>
</evidence>
<evidence type="ECO:0000256" key="5">
    <source>
        <dbReference type="SAM" id="MobiDB-lite"/>
    </source>
</evidence>
<evidence type="ECO:0000269" key="6">
    <source>
    </source>
</evidence>
<evidence type="ECO:0000305" key="7"/>
<accession>Q10251</accession>
<proteinExistence type="evidence at protein level"/>
<name>IF2P_SCHPO</name>
<reference key="1">
    <citation type="journal article" date="2002" name="Nature">
        <title>The genome sequence of Schizosaccharomyces pombe.</title>
        <authorList>
            <person name="Wood V."/>
            <person name="Gwilliam R."/>
            <person name="Rajandream M.A."/>
            <person name="Lyne M.H."/>
            <person name="Lyne R."/>
            <person name="Stewart A."/>
            <person name="Sgouros J.G."/>
            <person name="Peat N."/>
            <person name="Hayles J."/>
            <person name="Baker S.G."/>
            <person name="Basham D."/>
            <person name="Bowman S."/>
            <person name="Brooks K."/>
            <person name="Brown D."/>
            <person name="Brown S."/>
            <person name="Chillingworth T."/>
            <person name="Churcher C.M."/>
            <person name="Collins M."/>
            <person name="Connor R."/>
            <person name="Cronin A."/>
            <person name="Davis P."/>
            <person name="Feltwell T."/>
            <person name="Fraser A."/>
            <person name="Gentles S."/>
            <person name="Goble A."/>
            <person name="Hamlin N."/>
            <person name="Harris D.E."/>
            <person name="Hidalgo J."/>
            <person name="Hodgson G."/>
            <person name="Holroyd S."/>
            <person name="Hornsby T."/>
            <person name="Howarth S."/>
            <person name="Huckle E.J."/>
            <person name="Hunt S."/>
            <person name="Jagels K."/>
            <person name="James K.D."/>
            <person name="Jones L."/>
            <person name="Jones M."/>
            <person name="Leather S."/>
            <person name="McDonald S."/>
            <person name="McLean J."/>
            <person name="Mooney P."/>
            <person name="Moule S."/>
            <person name="Mungall K.L."/>
            <person name="Murphy L.D."/>
            <person name="Niblett D."/>
            <person name="Odell C."/>
            <person name="Oliver K."/>
            <person name="O'Neil S."/>
            <person name="Pearson D."/>
            <person name="Quail M.A."/>
            <person name="Rabbinowitsch E."/>
            <person name="Rutherford K.M."/>
            <person name="Rutter S."/>
            <person name="Saunders D."/>
            <person name="Seeger K."/>
            <person name="Sharp S."/>
            <person name="Skelton J."/>
            <person name="Simmonds M.N."/>
            <person name="Squares R."/>
            <person name="Squares S."/>
            <person name="Stevens K."/>
            <person name="Taylor K."/>
            <person name="Taylor R.G."/>
            <person name="Tivey A."/>
            <person name="Walsh S.V."/>
            <person name="Warren T."/>
            <person name="Whitehead S."/>
            <person name="Woodward J.R."/>
            <person name="Volckaert G."/>
            <person name="Aert R."/>
            <person name="Robben J."/>
            <person name="Grymonprez B."/>
            <person name="Weltjens I."/>
            <person name="Vanstreels E."/>
            <person name="Rieger M."/>
            <person name="Schaefer M."/>
            <person name="Mueller-Auer S."/>
            <person name="Gabel C."/>
            <person name="Fuchs M."/>
            <person name="Duesterhoeft A."/>
            <person name="Fritzc C."/>
            <person name="Holzer E."/>
            <person name="Moestl D."/>
            <person name="Hilbert H."/>
            <person name="Borzym K."/>
            <person name="Langer I."/>
            <person name="Beck A."/>
            <person name="Lehrach H."/>
            <person name="Reinhardt R."/>
            <person name="Pohl T.M."/>
            <person name="Eger P."/>
            <person name="Zimmermann W."/>
            <person name="Wedler H."/>
            <person name="Wambutt R."/>
            <person name="Purnelle B."/>
            <person name="Goffeau A."/>
            <person name="Cadieu E."/>
            <person name="Dreano S."/>
            <person name="Gloux S."/>
            <person name="Lelaure V."/>
            <person name="Mottier S."/>
            <person name="Galibert F."/>
            <person name="Aves S.J."/>
            <person name="Xiang Z."/>
            <person name="Hunt C."/>
            <person name="Moore K."/>
            <person name="Hurst S.M."/>
            <person name="Lucas M."/>
            <person name="Rochet M."/>
            <person name="Gaillardin C."/>
            <person name="Tallada V.A."/>
            <person name="Garzon A."/>
            <person name="Thode G."/>
            <person name="Daga R.R."/>
            <person name="Cruzado L."/>
            <person name="Jimenez J."/>
            <person name="Sanchez M."/>
            <person name="del Rey F."/>
            <person name="Benito J."/>
            <person name="Dominguez A."/>
            <person name="Revuelta J.L."/>
            <person name="Moreno S."/>
            <person name="Armstrong J."/>
            <person name="Forsburg S.L."/>
            <person name="Cerutti L."/>
            <person name="Lowe T."/>
            <person name="McCombie W.R."/>
            <person name="Paulsen I."/>
            <person name="Potashkin J."/>
            <person name="Shpakovski G.V."/>
            <person name="Ussery D."/>
            <person name="Barrell B.G."/>
            <person name="Nurse P."/>
        </authorList>
    </citation>
    <scope>NUCLEOTIDE SEQUENCE [LARGE SCALE GENOMIC DNA]</scope>
    <source>
        <strain>972 / ATCC 24843</strain>
    </source>
</reference>
<reference key="2">
    <citation type="journal article" date="2008" name="J. Proteome Res.">
        <title>Phosphoproteome analysis of fission yeast.</title>
        <authorList>
            <person name="Wilson-Grady J.T."/>
            <person name="Villen J."/>
            <person name="Gygi S.P."/>
        </authorList>
    </citation>
    <scope>PHOSPHORYLATION [LARGE SCALE ANALYSIS] AT SER-73; SER-77; SER-82; SER-127 AND THR-364</scope>
    <scope>IDENTIFICATION BY MASS SPECTROMETRY</scope>
</reference>
<organism>
    <name type="scientific">Schizosaccharomyces pombe (strain 972 / ATCC 24843)</name>
    <name type="common">Fission yeast</name>
    <dbReference type="NCBI Taxonomy" id="284812"/>
    <lineage>
        <taxon>Eukaryota</taxon>
        <taxon>Fungi</taxon>
        <taxon>Dikarya</taxon>
        <taxon>Ascomycota</taxon>
        <taxon>Taphrinomycotina</taxon>
        <taxon>Schizosaccharomycetes</taxon>
        <taxon>Schizosaccharomycetales</taxon>
        <taxon>Schizosaccharomycetaceae</taxon>
        <taxon>Schizosaccharomyces</taxon>
    </lineage>
</organism>
<sequence>MGKKGKKSGYADWEDDLGEDISGQNEYLDNTSQDSPQNDELAEKSENLAVSSEKTTSKKKKGKKNKGNKNQVSDDESQELESPQGPKELTAVTELDDDEFDYKPKKGKKGKKSKKVEEDDEPQEIESPQGPKELTAVTELDDDEFDYKPKKGKKGKKAQNNNESEAAAPPEIPEVRVKTKKEKEREKKEREKLRKKQQQAKKKGSTGEDTLASSEVSSEVDISTPAENDSSAKGKQAAGSKRKGPNVTALQKMLEEKRAREEEEQRIREEEARIAEEEKRLAEVEEARKEEARLKKKEKERKKKEEMKAQGKYLSKKQKEQQALAQRRLQQMLESGVRVAGLSNGEKKQKPVYTNKKKSNRSGTSSISSSGILESSPATSISVDEPQKDSKDDSEKVEKETEVERKEENEAEAEAVFDDWEAALEEPEVAENNEVVTEKKETDIKSDAVEHSIKDKEDSKTDKVDDIPQAAPAESNVSESDLRSPICCILGHVDTGKTKLLDNLRRSNVQEGEAGGITQQIGATYFPIESIKQKTKVVNKKGKLQYNIPGLLIIDTPGHESFTNLRSRGTSLCNIAILVIDIMHGLEPQTIESIRLLRDQKTPFVVALNKVDRLYGWHSIKDNAIQDSLSKQKKAIQREFRDRVESIILQLNEQGLNAALYFENKNLGRYVSLVPTSAQSGEGVPDLVALLISLTQTRMSDRIKYITTLECTVLEVKVIEGLGATIDVILSNGVLHEGDRIVLCGMGGPIITTVRALLTPQPLKEMRVKSAYVHHKEIKAAMGVKICANDLEKAVAGSRLLVVGPDDDEEDLAEEIMEDLENLLGRIDTSGIGVSVQASTLGSLEALLEFLKQMKIPVASVNIGPVYKKDVMRCATMLEKAKEYALMLCFDVKVDRDAEDLAEQLGVKIFSANVIYHLFDAFTAHQKKILEQKREESSDVAVFPCVLKTVAAFNKRDPIILGVDVVEGVLRINTPIVAVKQLPNGEPQIIELGRVASLEMNHKPVDKVKKGQAGAGVAMKLESSGSQILFGRQVTESDALYSHITRQSIDSLKDPAFRDEVSRDEWQLIIQLKKLFGII</sequence>
<gene>
    <name type="ORF">SPAC56F8.03</name>
</gene>
<feature type="chain" id="PRO_0000137295" description="Eukaryotic translation initiation factor 5B">
    <location>
        <begin position="1"/>
        <end position="1079"/>
    </location>
</feature>
<feature type="domain" description="tr-type G" evidence="4">
    <location>
        <begin position="482"/>
        <end position="700"/>
    </location>
</feature>
<feature type="region of interest" description="Disordered" evidence="5">
    <location>
        <begin position="1"/>
        <end position="478"/>
    </location>
</feature>
<feature type="region of interest" description="G1" evidence="4">
    <location>
        <begin position="491"/>
        <end position="498"/>
    </location>
</feature>
<feature type="region of interest" description="G2" evidence="4">
    <location>
        <begin position="516"/>
        <end position="520"/>
    </location>
</feature>
<feature type="region of interest" description="G3" evidence="4">
    <location>
        <begin position="555"/>
        <end position="558"/>
    </location>
</feature>
<feature type="region of interest" description="G4" evidence="4">
    <location>
        <begin position="609"/>
        <end position="612"/>
    </location>
</feature>
<feature type="region of interest" description="G5" evidence="4">
    <location>
        <begin position="677"/>
        <end position="679"/>
    </location>
</feature>
<feature type="compositionally biased region" description="Polar residues" evidence="5">
    <location>
        <begin position="22"/>
        <end position="38"/>
    </location>
</feature>
<feature type="compositionally biased region" description="Basic residues" evidence="5">
    <location>
        <begin position="57"/>
        <end position="67"/>
    </location>
</feature>
<feature type="compositionally biased region" description="Basic residues" evidence="5">
    <location>
        <begin position="105"/>
        <end position="114"/>
    </location>
</feature>
<feature type="compositionally biased region" description="Low complexity" evidence="5">
    <location>
        <begin position="160"/>
        <end position="169"/>
    </location>
</feature>
<feature type="compositionally biased region" description="Basic and acidic residues" evidence="5">
    <location>
        <begin position="173"/>
        <end position="192"/>
    </location>
</feature>
<feature type="compositionally biased region" description="Basic residues" evidence="5">
    <location>
        <begin position="193"/>
        <end position="204"/>
    </location>
</feature>
<feature type="compositionally biased region" description="Polar residues" evidence="5">
    <location>
        <begin position="207"/>
        <end position="233"/>
    </location>
</feature>
<feature type="compositionally biased region" description="Basic and acidic residues" evidence="5">
    <location>
        <begin position="253"/>
        <end position="293"/>
    </location>
</feature>
<feature type="compositionally biased region" description="Low complexity" evidence="5">
    <location>
        <begin position="321"/>
        <end position="334"/>
    </location>
</feature>
<feature type="compositionally biased region" description="Low complexity" evidence="5">
    <location>
        <begin position="361"/>
        <end position="376"/>
    </location>
</feature>
<feature type="compositionally biased region" description="Basic and acidic residues" evidence="5">
    <location>
        <begin position="385"/>
        <end position="408"/>
    </location>
</feature>
<feature type="compositionally biased region" description="Acidic residues" evidence="5">
    <location>
        <begin position="409"/>
        <end position="431"/>
    </location>
</feature>
<feature type="compositionally biased region" description="Basic and acidic residues" evidence="5">
    <location>
        <begin position="436"/>
        <end position="466"/>
    </location>
</feature>
<feature type="binding site" evidence="1">
    <location>
        <begin position="491"/>
        <end position="498"/>
    </location>
    <ligand>
        <name>GTP</name>
        <dbReference type="ChEBI" id="CHEBI:37565"/>
    </ligand>
</feature>
<feature type="modified residue" description="Phosphoserine" evidence="6">
    <location>
        <position position="73"/>
    </location>
</feature>
<feature type="modified residue" description="Phosphoserine" evidence="6">
    <location>
        <position position="77"/>
    </location>
</feature>
<feature type="modified residue" description="Phosphoserine" evidence="6">
    <location>
        <position position="82"/>
    </location>
</feature>
<feature type="modified residue" description="Phosphoserine" evidence="6">
    <location>
        <position position="127"/>
    </location>
</feature>
<feature type="modified residue" description="Phosphothreonine" evidence="6">
    <location>
        <position position="364"/>
    </location>
</feature>
<dbReference type="EC" id="3.6.5.3"/>
<dbReference type="EMBL" id="CU329670">
    <property type="protein sequence ID" value="CAA93574.1"/>
    <property type="molecule type" value="Genomic_DNA"/>
</dbReference>
<dbReference type="PIR" id="T38913">
    <property type="entry name" value="T38913"/>
</dbReference>
<dbReference type="SMR" id="Q10251"/>
<dbReference type="BioGRID" id="279669">
    <property type="interactions" value="2"/>
</dbReference>
<dbReference type="FunCoup" id="Q10251">
    <property type="interactions" value="659"/>
</dbReference>
<dbReference type="STRING" id="284812.Q10251"/>
<dbReference type="iPTMnet" id="Q10251"/>
<dbReference type="PaxDb" id="4896-SPAC56F8.03.1"/>
<dbReference type="EnsemblFungi" id="SPAC56F8.03.1">
    <property type="protein sequence ID" value="SPAC56F8.03.1:pep"/>
    <property type="gene ID" value="SPAC56F8.03"/>
</dbReference>
<dbReference type="KEGG" id="spo:2543241"/>
<dbReference type="PomBase" id="SPAC56F8.03"/>
<dbReference type="VEuPathDB" id="FungiDB:SPAC56F8.03"/>
<dbReference type="eggNOG" id="KOG1144">
    <property type="taxonomic scope" value="Eukaryota"/>
</dbReference>
<dbReference type="HOGENOM" id="CLU_002656_1_0_1"/>
<dbReference type="InParanoid" id="Q10251"/>
<dbReference type="OMA" id="EFAVMLC"/>
<dbReference type="PhylomeDB" id="Q10251"/>
<dbReference type="Reactome" id="R-SPO-72706">
    <property type="pathway name" value="GTP hydrolysis and joining of the 60S ribosomal subunit"/>
</dbReference>
<dbReference type="PRO" id="PR:Q10251"/>
<dbReference type="Proteomes" id="UP000002485">
    <property type="component" value="Chromosome I"/>
</dbReference>
<dbReference type="GO" id="GO:0005737">
    <property type="term" value="C:cytoplasm"/>
    <property type="evidence" value="ECO:0000318"/>
    <property type="project" value="GO_Central"/>
</dbReference>
<dbReference type="GO" id="GO:0005829">
    <property type="term" value="C:cytosol"/>
    <property type="evidence" value="ECO:0007005"/>
    <property type="project" value="PomBase"/>
</dbReference>
<dbReference type="GO" id="GO:0033290">
    <property type="term" value="C:eukaryotic 48S preinitiation complex"/>
    <property type="evidence" value="ECO:0000266"/>
    <property type="project" value="PomBase"/>
</dbReference>
<dbReference type="GO" id="GO:0005525">
    <property type="term" value="F:GTP binding"/>
    <property type="evidence" value="ECO:0000305"/>
    <property type="project" value="PomBase"/>
</dbReference>
<dbReference type="GO" id="GO:0003924">
    <property type="term" value="F:GTPase activity"/>
    <property type="evidence" value="ECO:0000266"/>
    <property type="project" value="PomBase"/>
</dbReference>
<dbReference type="GO" id="GO:0046872">
    <property type="term" value="F:metal ion binding"/>
    <property type="evidence" value="ECO:0007669"/>
    <property type="project" value="UniProtKB-KW"/>
</dbReference>
<dbReference type="GO" id="GO:0003743">
    <property type="term" value="F:translation initiation factor activity"/>
    <property type="evidence" value="ECO:0000318"/>
    <property type="project" value="GO_Central"/>
</dbReference>
<dbReference type="GO" id="GO:0002183">
    <property type="term" value="P:cytoplasmic translational initiation"/>
    <property type="evidence" value="ECO:0000266"/>
    <property type="project" value="PomBase"/>
</dbReference>
<dbReference type="GO" id="GO:0006413">
    <property type="term" value="P:translational initiation"/>
    <property type="evidence" value="ECO:0000318"/>
    <property type="project" value="GO_Central"/>
</dbReference>
<dbReference type="CDD" id="cd03703">
    <property type="entry name" value="aeIF5B_II"/>
    <property type="match status" value="1"/>
</dbReference>
<dbReference type="CDD" id="cd01887">
    <property type="entry name" value="IF2_eIF5B"/>
    <property type="match status" value="1"/>
</dbReference>
<dbReference type="FunFam" id="2.40.30.10:FF:000026">
    <property type="entry name" value="Eukaryotic translation initiation factor 5B"/>
    <property type="match status" value="1"/>
</dbReference>
<dbReference type="FunFam" id="3.40.50.10050:FF:000002">
    <property type="entry name" value="Eukaryotic translation initiation factor 5B"/>
    <property type="match status" value="1"/>
</dbReference>
<dbReference type="FunFam" id="3.40.50.300:FF:000112">
    <property type="entry name" value="Eukaryotic translation initiation factor 5B"/>
    <property type="match status" value="1"/>
</dbReference>
<dbReference type="FunFam" id="2.40.30.10:FF:000013">
    <property type="entry name" value="eukaryotic translation initiation factor 5B"/>
    <property type="match status" value="1"/>
</dbReference>
<dbReference type="Gene3D" id="3.40.50.300">
    <property type="entry name" value="P-loop containing nucleotide triphosphate hydrolases"/>
    <property type="match status" value="1"/>
</dbReference>
<dbReference type="Gene3D" id="2.40.30.10">
    <property type="entry name" value="Translation factors"/>
    <property type="match status" value="2"/>
</dbReference>
<dbReference type="Gene3D" id="3.40.50.10050">
    <property type="entry name" value="Translation initiation factor IF- 2, domain 3"/>
    <property type="match status" value="1"/>
</dbReference>
<dbReference type="InterPro" id="IPR029459">
    <property type="entry name" value="EFTU-type"/>
</dbReference>
<dbReference type="InterPro" id="IPR027417">
    <property type="entry name" value="P-loop_NTPase"/>
</dbReference>
<dbReference type="InterPro" id="IPR005225">
    <property type="entry name" value="Small_GTP-bd"/>
</dbReference>
<dbReference type="InterPro" id="IPR000795">
    <property type="entry name" value="T_Tr_GTP-bd_dom"/>
</dbReference>
<dbReference type="InterPro" id="IPR015760">
    <property type="entry name" value="TIF_IF2"/>
</dbReference>
<dbReference type="InterPro" id="IPR023115">
    <property type="entry name" value="TIF_IF2_dom3"/>
</dbReference>
<dbReference type="InterPro" id="IPR036925">
    <property type="entry name" value="TIF_IF2_dom3_sf"/>
</dbReference>
<dbReference type="InterPro" id="IPR009000">
    <property type="entry name" value="Transl_B-barrel_sf"/>
</dbReference>
<dbReference type="NCBIfam" id="NF003078">
    <property type="entry name" value="PRK04004.1"/>
    <property type="match status" value="1"/>
</dbReference>
<dbReference type="NCBIfam" id="TIGR00231">
    <property type="entry name" value="small_GTP"/>
    <property type="match status" value="1"/>
</dbReference>
<dbReference type="PANTHER" id="PTHR43381:SF4">
    <property type="entry name" value="EUKARYOTIC TRANSLATION INITIATION FACTOR 5B"/>
    <property type="match status" value="1"/>
</dbReference>
<dbReference type="PANTHER" id="PTHR43381">
    <property type="entry name" value="TRANSLATION INITIATION FACTOR IF-2-RELATED"/>
    <property type="match status" value="1"/>
</dbReference>
<dbReference type="Pfam" id="PF00009">
    <property type="entry name" value="GTP_EFTU"/>
    <property type="match status" value="1"/>
</dbReference>
<dbReference type="Pfam" id="PF14578">
    <property type="entry name" value="GTP_EFTU_D4"/>
    <property type="match status" value="1"/>
</dbReference>
<dbReference type="Pfam" id="PF11987">
    <property type="entry name" value="IF-2"/>
    <property type="match status" value="1"/>
</dbReference>
<dbReference type="PRINTS" id="PR00315">
    <property type="entry name" value="ELONGATNFCT"/>
</dbReference>
<dbReference type="SUPFAM" id="SSF52156">
    <property type="entry name" value="Initiation factor IF2/eIF5b, domain 3"/>
    <property type="match status" value="1"/>
</dbReference>
<dbReference type="SUPFAM" id="SSF52540">
    <property type="entry name" value="P-loop containing nucleoside triphosphate hydrolases"/>
    <property type="match status" value="1"/>
</dbReference>
<dbReference type="SUPFAM" id="SSF50447">
    <property type="entry name" value="Translation proteins"/>
    <property type="match status" value="1"/>
</dbReference>
<dbReference type="PROSITE" id="PS51722">
    <property type="entry name" value="G_TR_2"/>
    <property type="match status" value="1"/>
</dbReference>
<comment type="function">
    <text evidence="3">Plays a role in translation initiation. Translational GTPase that catalyzes the joining of the 40S and 60S subunits to form the 80S initiation complex with the initiator methionine-tRNA in the P-site base paired to the start codon. GTP binding and hydrolysis induces conformational changes in the enzyme that renders it active for productive interactions with the ribosome. The release of the enzyme after formation of the initiation complex is a prerequisite to form elongation-competent ribosomes.</text>
</comment>
<comment type="catalytic activity">
    <reaction evidence="3">
        <text>GTP + H2O = GDP + phosphate + H(+)</text>
        <dbReference type="Rhea" id="RHEA:19669"/>
        <dbReference type="ChEBI" id="CHEBI:15377"/>
        <dbReference type="ChEBI" id="CHEBI:15378"/>
        <dbReference type="ChEBI" id="CHEBI:37565"/>
        <dbReference type="ChEBI" id="CHEBI:43474"/>
        <dbReference type="ChEBI" id="CHEBI:58189"/>
        <dbReference type="EC" id="3.6.5.3"/>
    </reaction>
</comment>
<comment type="cofactor">
    <cofactor evidence="2">
        <name>a monovalent cation</name>
        <dbReference type="ChEBI" id="CHEBI:60242"/>
    </cofactor>
    <text evidence="2">Binds 1 monovalent cation per monomer in the active site. Structural cofactor that stabilizes the GTP-bound 'on' state. May also act as a transition state stabilizer of the hydrolysis reaction.</text>
</comment>
<comment type="subcellular location">
    <subcellularLocation>
        <location evidence="3">Cytoplasm</location>
    </subcellularLocation>
</comment>
<comment type="similarity">
    <text evidence="7">Belongs to the TRAFAC class translation factor GTPase superfamily. Classic translation factor GTPase family. IF-2 subfamily.</text>
</comment>